<reference key="1">
    <citation type="submission" date="2009-07" db="EMBL/GenBank/DDBJ databases">
        <title>Complete sequence of Pectobacterium carotovorum subsp. carotovorum PC1.</title>
        <authorList>
            <consortium name="US DOE Joint Genome Institute"/>
            <person name="Lucas S."/>
            <person name="Copeland A."/>
            <person name="Lapidus A."/>
            <person name="Glavina del Rio T."/>
            <person name="Tice H."/>
            <person name="Bruce D."/>
            <person name="Goodwin L."/>
            <person name="Pitluck S."/>
            <person name="Munk A.C."/>
            <person name="Brettin T."/>
            <person name="Detter J.C."/>
            <person name="Han C."/>
            <person name="Tapia R."/>
            <person name="Larimer F."/>
            <person name="Land M."/>
            <person name="Hauser L."/>
            <person name="Kyrpides N."/>
            <person name="Mikhailova N."/>
            <person name="Balakrishnan V."/>
            <person name="Glasner J."/>
            <person name="Perna N.T."/>
        </authorList>
    </citation>
    <scope>NUCLEOTIDE SEQUENCE [LARGE SCALE GENOMIC DNA]</scope>
    <source>
        <strain>PC1</strain>
    </source>
</reference>
<sequence length="548" mass="57135">MAAKDVKFGNDARVKMLRGVNVLADAVKVTLGPKGRNVVLDKSFGAPTITKDGVSVAREIELEDKFENMGAQMVKEVASKANDAAGDGTTTATVLAQAIITEGLKAVAAGMNPMDLKRGIDKAVIAAVEELKALSVPCSDSKAIAQVGTISANSDETVGKMIAEAMDKVGKEGVITVEEGTGLQDELDVVEGMQFDRGYLSPYFINKPETGAVELESPFILLADKKISNIREMLPVLEAVAKAGKPLVIVAEDVEGEALATLVVNTMRGIVKVAAVKAPGFGDRRKAMLQDIATLTGGTVISEEIGLELEKATLEDLGQAKRVVINKDTTTIIDGTGEEAAIQGRVAQIRQQVEEATSDYDREKLQERVAKLAGGVAVIKVGAATEVEMKEKKARVEDALAATRAAVEEGVVAGGGVALVRVAAKLASLTAQNEDQNVGIKVALRAMEAPLRQIVSNAGEEPSVVANTVKAGEGNYGYNAATEEYGNMIDFGILDPTKVTRSALQYAASVAGLMITTECMVTDLPKSDAPDLGAAGGMGGMGGMGGMM</sequence>
<dbReference type="EC" id="5.6.1.7" evidence="1"/>
<dbReference type="EMBL" id="CP001657">
    <property type="protein sequence ID" value="ACT11564.1"/>
    <property type="molecule type" value="Genomic_DNA"/>
</dbReference>
<dbReference type="RefSeq" id="WP_012773217.1">
    <property type="nucleotide sequence ID" value="NC_012917.1"/>
</dbReference>
<dbReference type="SMR" id="C6DKC7"/>
<dbReference type="STRING" id="561230.PC1_0509"/>
<dbReference type="GeneID" id="67795656"/>
<dbReference type="KEGG" id="pct:PC1_0509"/>
<dbReference type="eggNOG" id="COG0459">
    <property type="taxonomic scope" value="Bacteria"/>
</dbReference>
<dbReference type="HOGENOM" id="CLU_016503_3_0_6"/>
<dbReference type="OrthoDB" id="9766614at2"/>
<dbReference type="Proteomes" id="UP000002736">
    <property type="component" value="Chromosome"/>
</dbReference>
<dbReference type="GO" id="GO:0005737">
    <property type="term" value="C:cytoplasm"/>
    <property type="evidence" value="ECO:0007669"/>
    <property type="project" value="UniProtKB-SubCell"/>
</dbReference>
<dbReference type="GO" id="GO:0005524">
    <property type="term" value="F:ATP binding"/>
    <property type="evidence" value="ECO:0007669"/>
    <property type="project" value="UniProtKB-UniRule"/>
</dbReference>
<dbReference type="GO" id="GO:0140662">
    <property type="term" value="F:ATP-dependent protein folding chaperone"/>
    <property type="evidence" value="ECO:0007669"/>
    <property type="project" value="InterPro"/>
</dbReference>
<dbReference type="GO" id="GO:0016853">
    <property type="term" value="F:isomerase activity"/>
    <property type="evidence" value="ECO:0007669"/>
    <property type="project" value="UniProtKB-KW"/>
</dbReference>
<dbReference type="GO" id="GO:0051082">
    <property type="term" value="F:unfolded protein binding"/>
    <property type="evidence" value="ECO:0007669"/>
    <property type="project" value="UniProtKB-UniRule"/>
</dbReference>
<dbReference type="GO" id="GO:0042026">
    <property type="term" value="P:protein refolding"/>
    <property type="evidence" value="ECO:0007669"/>
    <property type="project" value="UniProtKB-UniRule"/>
</dbReference>
<dbReference type="CDD" id="cd03344">
    <property type="entry name" value="GroEL"/>
    <property type="match status" value="1"/>
</dbReference>
<dbReference type="FunFam" id="1.10.560.10:FF:000001">
    <property type="entry name" value="60 kDa chaperonin"/>
    <property type="match status" value="1"/>
</dbReference>
<dbReference type="FunFam" id="3.50.7.10:FF:000001">
    <property type="entry name" value="60 kDa chaperonin"/>
    <property type="match status" value="1"/>
</dbReference>
<dbReference type="Gene3D" id="3.50.7.10">
    <property type="entry name" value="GroEL"/>
    <property type="match status" value="1"/>
</dbReference>
<dbReference type="Gene3D" id="1.10.560.10">
    <property type="entry name" value="GroEL-like equatorial domain"/>
    <property type="match status" value="1"/>
</dbReference>
<dbReference type="Gene3D" id="3.30.260.10">
    <property type="entry name" value="TCP-1-like chaperonin intermediate domain"/>
    <property type="match status" value="1"/>
</dbReference>
<dbReference type="HAMAP" id="MF_00600">
    <property type="entry name" value="CH60"/>
    <property type="match status" value="1"/>
</dbReference>
<dbReference type="InterPro" id="IPR018370">
    <property type="entry name" value="Chaperonin_Cpn60_CS"/>
</dbReference>
<dbReference type="InterPro" id="IPR001844">
    <property type="entry name" value="Cpn60/GroEL"/>
</dbReference>
<dbReference type="InterPro" id="IPR002423">
    <property type="entry name" value="Cpn60/GroEL/TCP-1"/>
</dbReference>
<dbReference type="InterPro" id="IPR027409">
    <property type="entry name" value="GroEL-like_apical_dom_sf"/>
</dbReference>
<dbReference type="InterPro" id="IPR027413">
    <property type="entry name" value="GROEL-like_equatorial_sf"/>
</dbReference>
<dbReference type="InterPro" id="IPR027410">
    <property type="entry name" value="TCP-1-like_intermed_sf"/>
</dbReference>
<dbReference type="NCBIfam" id="TIGR02348">
    <property type="entry name" value="GroEL"/>
    <property type="match status" value="1"/>
</dbReference>
<dbReference type="NCBIfam" id="NF000592">
    <property type="entry name" value="PRK00013.1"/>
    <property type="match status" value="1"/>
</dbReference>
<dbReference type="NCBIfam" id="NF009487">
    <property type="entry name" value="PRK12849.1"/>
    <property type="match status" value="1"/>
</dbReference>
<dbReference type="NCBIfam" id="NF009488">
    <property type="entry name" value="PRK12850.1"/>
    <property type="match status" value="1"/>
</dbReference>
<dbReference type="NCBIfam" id="NF009489">
    <property type="entry name" value="PRK12851.1"/>
    <property type="match status" value="1"/>
</dbReference>
<dbReference type="PANTHER" id="PTHR45633">
    <property type="entry name" value="60 KDA HEAT SHOCK PROTEIN, MITOCHONDRIAL"/>
    <property type="match status" value="1"/>
</dbReference>
<dbReference type="Pfam" id="PF00118">
    <property type="entry name" value="Cpn60_TCP1"/>
    <property type="match status" value="1"/>
</dbReference>
<dbReference type="PRINTS" id="PR00298">
    <property type="entry name" value="CHAPERONIN60"/>
</dbReference>
<dbReference type="SUPFAM" id="SSF52029">
    <property type="entry name" value="GroEL apical domain-like"/>
    <property type="match status" value="1"/>
</dbReference>
<dbReference type="SUPFAM" id="SSF48592">
    <property type="entry name" value="GroEL equatorial domain-like"/>
    <property type="match status" value="1"/>
</dbReference>
<dbReference type="SUPFAM" id="SSF54849">
    <property type="entry name" value="GroEL-intermediate domain like"/>
    <property type="match status" value="1"/>
</dbReference>
<dbReference type="PROSITE" id="PS00296">
    <property type="entry name" value="CHAPERONINS_CPN60"/>
    <property type="match status" value="1"/>
</dbReference>
<protein>
    <recommendedName>
        <fullName evidence="1">Chaperonin GroEL</fullName>
        <ecNumber evidence="1">5.6.1.7</ecNumber>
    </recommendedName>
    <alternativeName>
        <fullName evidence="1">60 kDa chaperonin</fullName>
    </alternativeName>
    <alternativeName>
        <fullName evidence="1">Chaperonin-60</fullName>
        <shortName evidence="1">Cpn60</shortName>
    </alternativeName>
</protein>
<gene>
    <name evidence="1" type="primary">groEL</name>
    <name evidence="1" type="synonym">groL</name>
    <name type="ordered locus">PC1_0509</name>
</gene>
<name>CH60_PECCP</name>
<organism>
    <name type="scientific">Pectobacterium carotovorum subsp. carotovorum (strain PC1)</name>
    <dbReference type="NCBI Taxonomy" id="561230"/>
    <lineage>
        <taxon>Bacteria</taxon>
        <taxon>Pseudomonadati</taxon>
        <taxon>Pseudomonadota</taxon>
        <taxon>Gammaproteobacteria</taxon>
        <taxon>Enterobacterales</taxon>
        <taxon>Pectobacteriaceae</taxon>
        <taxon>Pectobacterium</taxon>
    </lineage>
</organism>
<accession>C6DKC7</accession>
<feature type="chain" id="PRO_1000212205" description="Chaperonin GroEL">
    <location>
        <begin position="1"/>
        <end position="548"/>
    </location>
</feature>
<feature type="binding site" evidence="1">
    <location>
        <begin position="30"/>
        <end position="33"/>
    </location>
    <ligand>
        <name>ATP</name>
        <dbReference type="ChEBI" id="CHEBI:30616"/>
    </ligand>
</feature>
<feature type="binding site" evidence="1">
    <location>
        <position position="51"/>
    </location>
    <ligand>
        <name>ATP</name>
        <dbReference type="ChEBI" id="CHEBI:30616"/>
    </ligand>
</feature>
<feature type="binding site" evidence="1">
    <location>
        <begin position="87"/>
        <end position="91"/>
    </location>
    <ligand>
        <name>ATP</name>
        <dbReference type="ChEBI" id="CHEBI:30616"/>
    </ligand>
</feature>
<feature type="binding site" evidence="1">
    <location>
        <position position="415"/>
    </location>
    <ligand>
        <name>ATP</name>
        <dbReference type="ChEBI" id="CHEBI:30616"/>
    </ligand>
</feature>
<feature type="binding site" evidence="1">
    <location>
        <begin position="479"/>
        <end position="481"/>
    </location>
    <ligand>
        <name>ATP</name>
        <dbReference type="ChEBI" id="CHEBI:30616"/>
    </ligand>
</feature>
<feature type="binding site" evidence="1">
    <location>
        <position position="495"/>
    </location>
    <ligand>
        <name>ATP</name>
        <dbReference type="ChEBI" id="CHEBI:30616"/>
    </ligand>
</feature>
<keyword id="KW-0067">ATP-binding</keyword>
<keyword id="KW-0143">Chaperone</keyword>
<keyword id="KW-0963">Cytoplasm</keyword>
<keyword id="KW-0413">Isomerase</keyword>
<keyword id="KW-0547">Nucleotide-binding</keyword>
<evidence type="ECO:0000255" key="1">
    <source>
        <dbReference type="HAMAP-Rule" id="MF_00600"/>
    </source>
</evidence>
<comment type="function">
    <text evidence="1">Together with its co-chaperonin GroES, plays an essential role in assisting protein folding. The GroEL-GroES system forms a nano-cage that allows encapsulation of the non-native substrate proteins and provides a physical environment optimized to promote and accelerate protein folding.</text>
</comment>
<comment type="catalytic activity">
    <reaction evidence="1">
        <text>ATP + H2O + a folded polypeptide = ADP + phosphate + an unfolded polypeptide.</text>
        <dbReference type="EC" id="5.6.1.7"/>
    </reaction>
</comment>
<comment type="subunit">
    <text evidence="1">Forms a cylinder of 14 subunits composed of two heptameric rings stacked back-to-back. Interacts with the co-chaperonin GroES.</text>
</comment>
<comment type="subcellular location">
    <subcellularLocation>
        <location evidence="1">Cytoplasm</location>
    </subcellularLocation>
</comment>
<comment type="similarity">
    <text evidence="1">Belongs to the chaperonin (HSP60) family.</text>
</comment>
<proteinExistence type="inferred from homology"/>